<evidence type="ECO:0000255" key="1">
    <source>
        <dbReference type="HAMAP-Rule" id="MF_00688"/>
    </source>
</evidence>
<accession>Q72W44</accession>
<protein>
    <recommendedName>
        <fullName evidence="1">Leucyl/phenylalanyl-tRNA--protein transferase</fullName>
        <ecNumber evidence="1">2.3.2.6</ecNumber>
    </recommendedName>
    <alternativeName>
        <fullName evidence="1">L/F-transferase</fullName>
    </alternativeName>
    <alternativeName>
        <fullName evidence="1">Leucyltransferase</fullName>
    </alternativeName>
    <alternativeName>
        <fullName evidence="1">Phenyalanyltransferase</fullName>
    </alternativeName>
</protein>
<comment type="function">
    <text evidence="1">Functions in the N-end rule pathway of protein degradation where it conjugates Leu, Phe and, less efficiently, Met from aminoacyl-tRNAs to the N-termini of proteins containing an N-terminal arginine or lysine.</text>
</comment>
<comment type="catalytic activity">
    <reaction evidence="1">
        <text>N-terminal L-lysyl-[protein] + L-leucyl-tRNA(Leu) = N-terminal L-leucyl-L-lysyl-[protein] + tRNA(Leu) + H(+)</text>
        <dbReference type="Rhea" id="RHEA:12340"/>
        <dbReference type="Rhea" id="RHEA-COMP:9613"/>
        <dbReference type="Rhea" id="RHEA-COMP:9622"/>
        <dbReference type="Rhea" id="RHEA-COMP:12670"/>
        <dbReference type="Rhea" id="RHEA-COMP:12671"/>
        <dbReference type="ChEBI" id="CHEBI:15378"/>
        <dbReference type="ChEBI" id="CHEBI:65249"/>
        <dbReference type="ChEBI" id="CHEBI:78442"/>
        <dbReference type="ChEBI" id="CHEBI:78494"/>
        <dbReference type="ChEBI" id="CHEBI:133043"/>
        <dbReference type="EC" id="2.3.2.6"/>
    </reaction>
</comment>
<comment type="catalytic activity">
    <reaction evidence="1">
        <text>N-terminal L-arginyl-[protein] + L-leucyl-tRNA(Leu) = N-terminal L-leucyl-L-arginyl-[protein] + tRNA(Leu) + H(+)</text>
        <dbReference type="Rhea" id="RHEA:50416"/>
        <dbReference type="Rhea" id="RHEA-COMP:9613"/>
        <dbReference type="Rhea" id="RHEA-COMP:9622"/>
        <dbReference type="Rhea" id="RHEA-COMP:12672"/>
        <dbReference type="Rhea" id="RHEA-COMP:12673"/>
        <dbReference type="ChEBI" id="CHEBI:15378"/>
        <dbReference type="ChEBI" id="CHEBI:64719"/>
        <dbReference type="ChEBI" id="CHEBI:78442"/>
        <dbReference type="ChEBI" id="CHEBI:78494"/>
        <dbReference type="ChEBI" id="CHEBI:133044"/>
        <dbReference type="EC" id="2.3.2.6"/>
    </reaction>
</comment>
<comment type="catalytic activity">
    <reaction evidence="1">
        <text>L-phenylalanyl-tRNA(Phe) + an N-terminal L-alpha-aminoacyl-[protein] = an N-terminal L-phenylalanyl-L-alpha-aminoacyl-[protein] + tRNA(Phe)</text>
        <dbReference type="Rhea" id="RHEA:43632"/>
        <dbReference type="Rhea" id="RHEA-COMP:9668"/>
        <dbReference type="Rhea" id="RHEA-COMP:9699"/>
        <dbReference type="Rhea" id="RHEA-COMP:10636"/>
        <dbReference type="Rhea" id="RHEA-COMP:10637"/>
        <dbReference type="ChEBI" id="CHEBI:78442"/>
        <dbReference type="ChEBI" id="CHEBI:78531"/>
        <dbReference type="ChEBI" id="CHEBI:78597"/>
        <dbReference type="ChEBI" id="CHEBI:83561"/>
        <dbReference type="EC" id="2.3.2.6"/>
    </reaction>
</comment>
<comment type="subcellular location">
    <subcellularLocation>
        <location evidence="1">Cytoplasm</location>
    </subcellularLocation>
</comment>
<comment type="similarity">
    <text evidence="1">Belongs to the L/F-transferase family.</text>
</comment>
<keyword id="KW-0012">Acyltransferase</keyword>
<keyword id="KW-0963">Cytoplasm</keyword>
<keyword id="KW-0808">Transferase</keyword>
<sequence>MKDFSDFFRNPHIWDREIVAVGGDLSPERLLYAYKNGIFPWSDQPILWYCLDPRSIFDLNKLHISKRLKRKINQKRYTITFNRAFEQVMRCCAYRPGEDTWITDLFIKSYTEFHKLGYAHSLEVWDENGKLGGGVYGIAIGNFFAGESMFSFIPDFGKIGLFHLFETLKKDHFTLFDTQQLNLVTLSLGAYQIPKKEYLKRLESAVASGKKWNPSHFVL</sequence>
<gene>
    <name evidence="1" type="primary">aat</name>
    <name type="ordered locus">LIC_10096</name>
</gene>
<reference key="1">
    <citation type="journal article" date="2004" name="J. Bacteriol.">
        <title>Comparative genomics of two Leptospira interrogans serovars reveals novel insights into physiology and pathogenesis.</title>
        <authorList>
            <person name="Nascimento A.L.T.O."/>
            <person name="Ko A.I."/>
            <person name="Martins E.A.L."/>
            <person name="Monteiro-Vitorello C.B."/>
            <person name="Ho P.L."/>
            <person name="Haake D.A."/>
            <person name="Verjovski-Almeida S."/>
            <person name="Hartskeerl R.A."/>
            <person name="Marques M.V."/>
            <person name="Oliveira M.C."/>
            <person name="Menck C.F.M."/>
            <person name="Leite L.C.C."/>
            <person name="Carrer H."/>
            <person name="Coutinho L.L."/>
            <person name="Degrave W.M."/>
            <person name="Dellagostin O.A."/>
            <person name="El-Dorry H."/>
            <person name="Ferro E.S."/>
            <person name="Ferro M.I.T."/>
            <person name="Furlan L.R."/>
            <person name="Gamberini M."/>
            <person name="Giglioti E.A."/>
            <person name="Goes-Neto A."/>
            <person name="Goldman G.H."/>
            <person name="Goldman M.H.S."/>
            <person name="Harakava R."/>
            <person name="Jeronimo S.M.B."/>
            <person name="Junqueira-de-Azevedo I.L.M."/>
            <person name="Kimura E.T."/>
            <person name="Kuramae E.E."/>
            <person name="Lemos E.G.M."/>
            <person name="Lemos M.V.F."/>
            <person name="Marino C.L."/>
            <person name="Nunes L.R."/>
            <person name="de Oliveira R.C."/>
            <person name="Pereira G.G."/>
            <person name="Reis M.S."/>
            <person name="Schriefer A."/>
            <person name="Siqueira W.J."/>
            <person name="Sommer P."/>
            <person name="Tsai S.M."/>
            <person name="Simpson A.J.G."/>
            <person name="Ferro J.A."/>
            <person name="Camargo L.E.A."/>
            <person name="Kitajima J.P."/>
            <person name="Setubal J.C."/>
            <person name="Van Sluys M.A."/>
        </authorList>
    </citation>
    <scope>NUCLEOTIDE SEQUENCE [LARGE SCALE GENOMIC DNA]</scope>
    <source>
        <strain>Fiocruz L1-130</strain>
    </source>
</reference>
<proteinExistence type="inferred from homology"/>
<organism>
    <name type="scientific">Leptospira interrogans serogroup Icterohaemorrhagiae serovar copenhageni (strain Fiocruz L1-130)</name>
    <dbReference type="NCBI Taxonomy" id="267671"/>
    <lineage>
        <taxon>Bacteria</taxon>
        <taxon>Pseudomonadati</taxon>
        <taxon>Spirochaetota</taxon>
        <taxon>Spirochaetia</taxon>
        <taxon>Leptospirales</taxon>
        <taxon>Leptospiraceae</taxon>
        <taxon>Leptospira</taxon>
    </lineage>
</organism>
<dbReference type="EC" id="2.3.2.6" evidence="1"/>
<dbReference type="EMBL" id="AE016823">
    <property type="protein sequence ID" value="AAS68730.1"/>
    <property type="molecule type" value="Genomic_DNA"/>
</dbReference>
<dbReference type="RefSeq" id="WP_000651373.1">
    <property type="nucleotide sequence ID" value="NC_005823.1"/>
</dbReference>
<dbReference type="SMR" id="Q72W44"/>
<dbReference type="GeneID" id="61143452"/>
<dbReference type="KEGG" id="lic:LIC_10096"/>
<dbReference type="HOGENOM" id="CLU_075045_0_1_12"/>
<dbReference type="Proteomes" id="UP000007037">
    <property type="component" value="Chromosome I"/>
</dbReference>
<dbReference type="GO" id="GO:0005737">
    <property type="term" value="C:cytoplasm"/>
    <property type="evidence" value="ECO:0007669"/>
    <property type="project" value="UniProtKB-SubCell"/>
</dbReference>
<dbReference type="GO" id="GO:0008914">
    <property type="term" value="F:leucyl-tRNA--protein transferase activity"/>
    <property type="evidence" value="ECO:0007669"/>
    <property type="project" value="UniProtKB-UniRule"/>
</dbReference>
<dbReference type="GO" id="GO:0030163">
    <property type="term" value="P:protein catabolic process"/>
    <property type="evidence" value="ECO:0007669"/>
    <property type="project" value="UniProtKB-UniRule"/>
</dbReference>
<dbReference type="FunFam" id="3.40.630.70:FF:000001">
    <property type="entry name" value="Leucyl/phenylalanyl-tRNA--protein transferase"/>
    <property type="match status" value="1"/>
</dbReference>
<dbReference type="Gene3D" id="3.40.630.70">
    <property type="entry name" value="Leucyl/phenylalanyl-tRNA-protein transferase, C-terminal domain"/>
    <property type="match status" value="1"/>
</dbReference>
<dbReference type="Gene3D" id="3.30.70.3550">
    <property type="entry name" value="Leucyl/phenylalanyl-tRNA-protein transferase, N-terminal domain"/>
    <property type="match status" value="1"/>
</dbReference>
<dbReference type="HAMAP" id="MF_00688">
    <property type="entry name" value="Leu_Phe_trans"/>
    <property type="match status" value="1"/>
</dbReference>
<dbReference type="InterPro" id="IPR016181">
    <property type="entry name" value="Acyl_CoA_acyltransferase"/>
</dbReference>
<dbReference type="InterPro" id="IPR004616">
    <property type="entry name" value="Leu/Phe-tRNA_Trfase"/>
</dbReference>
<dbReference type="InterPro" id="IPR042203">
    <property type="entry name" value="Leu/Phe-tRNA_Trfase_C"/>
</dbReference>
<dbReference type="InterPro" id="IPR042221">
    <property type="entry name" value="Leu/Phe-tRNA_Trfase_N"/>
</dbReference>
<dbReference type="NCBIfam" id="TIGR00667">
    <property type="entry name" value="aat"/>
    <property type="match status" value="1"/>
</dbReference>
<dbReference type="PANTHER" id="PTHR30098">
    <property type="entry name" value="LEUCYL/PHENYLALANYL-TRNA--PROTEIN TRANSFERASE"/>
    <property type="match status" value="1"/>
</dbReference>
<dbReference type="PANTHER" id="PTHR30098:SF2">
    <property type="entry name" value="LEUCYL_PHENYLALANYL-TRNA--PROTEIN TRANSFERASE"/>
    <property type="match status" value="1"/>
</dbReference>
<dbReference type="Pfam" id="PF03588">
    <property type="entry name" value="Leu_Phe_trans"/>
    <property type="match status" value="1"/>
</dbReference>
<dbReference type="SUPFAM" id="SSF55729">
    <property type="entry name" value="Acyl-CoA N-acyltransferases (Nat)"/>
    <property type="match status" value="1"/>
</dbReference>
<name>LFTR_LEPIC</name>
<feature type="chain" id="PRO_0000207226" description="Leucyl/phenylalanyl-tRNA--protein transferase">
    <location>
        <begin position="1"/>
        <end position="219"/>
    </location>
</feature>